<gene>
    <name evidence="5" type="primary">HR1</name>
    <name type="synonym">HR1KZ10</name>
    <name evidence="8" type="ordered locus">At3g50450</name>
    <name evidence="9" type="ORF">T20E23.50</name>
</gene>
<comment type="function">
    <text evidence="7">Probable disease resistance (R) protein.</text>
</comment>
<comment type="subcellular location">
    <subcellularLocation>
        <location evidence="1">Membrane</location>
        <topology evidence="1">Single-pass membrane protein</topology>
    </subcellularLocation>
</comment>
<comment type="induction">
    <text evidence="4">Expressed in leaves after powdery mildew infection (e.g. Erysiphe cichoracearum UCSC1).</text>
</comment>
<comment type="similarity">
    <text evidence="7">Belongs to the plant RPW8 protein family.</text>
</comment>
<proteinExistence type="evidence at transcript level"/>
<evidence type="ECO:0000255" key="1"/>
<evidence type="ECO:0000255" key="2">
    <source>
        <dbReference type="PROSITE-ProRule" id="PRU00495"/>
    </source>
</evidence>
<evidence type="ECO:0000255" key="3">
    <source>
        <dbReference type="PROSITE-ProRule" id="PRU00498"/>
    </source>
</evidence>
<evidence type="ECO:0000269" key="4">
    <source>
    </source>
</evidence>
<evidence type="ECO:0000303" key="5">
    <source>
    </source>
</evidence>
<evidence type="ECO:0000303" key="6">
    <source>
    </source>
</evidence>
<evidence type="ECO:0000305" key="7"/>
<evidence type="ECO:0000312" key="8">
    <source>
        <dbReference type="Araport" id="AT3G50450"/>
    </source>
</evidence>
<evidence type="ECO:0000312" key="9">
    <source>
        <dbReference type="EMBL" id="CAB62474.1"/>
    </source>
</evidence>
<evidence type="ECO:0000312" key="10">
    <source>
        <dbReference type="Proteomes" id="UP000006548"/>
    </source>
</evidence>
<keyword id="KW-0175">Coiled coil</keyword>
<keyword id="KW-0325">Glycoprotein</keyword>
<keyword id="KW-0381">Hypersensitive response</keyword>
<keyword id="KW-0472">Membrane</keyword>
<keyword id="KW-0611">Plant defense</keyword>
<keyword id="KW-1185">Reference proteome</keyword>
<keyword id="KW-0812">Transmembrane</keyword>
<keyword id="KW-1133">Transmembrane helix</keyword>
<reference key="1">
    <citation type="journal article" date="2001" name="Science">
        <title>Broad-spectrum mildew resistance in Arabidopsis thaliana mediated by RPW8.</title>
        <authorList>
            <person name="Xiao S."/>
            <person name="Ellwood S."/>
            <person name="Calis O."/>
            <person name="Patrick E."/>
            <person name="Li T."/>
            <person name="Coleman M."/>
            <person name="Turner J.G."/>
        </authorList>
    </citation>
    <scope>NUCLEOTIDE SEQUENCE [GENOMIC DNA]</scope>
    <scope>GENE FAMILY</scope>
    <scope>NOMENCLATURE</scope>
    <source>
        <strain>cv. Ms-0</strain>
    </source>
</reference>
<reference key="2">
    <citation type="journal article" date="2000" name="Nature">
        <title>Sequence and analysis of chromosome 3 of the plant Arabidopsis thaliana.</title>
        <authorList>
            <person name="Salanoubat M."/>
            <person name="Lemcke K."/>
            <person name="Rieger M."/>
            <person name="Ansorge W."/>
            <person name="Unseld M."/>
            <person name="Fartmann B."/>
            <person name="Valle G."/>
            <person name="Bloecker H."/>
            <person name="Perez-Alonso M."/>
            <person name="Obermaier B."/>
            <person name="Delseny M."/>
            <person name="Boutry M."/>
            <person name="Grivell L.A."/>
            <person name="Mache R."/>
            <person name="Puigdomenech P."/>
            <person name="De Simone V."/>
            <person name="Choisne N."/>
            <person name="Artiguenave F."/>
            <person name="Robert C."/>
            <person name="Brottier P."/>
            <person name="Wincker P."/>
            <person name="Cattolico L."/>
            <person name="Weissenbach J."/>
            <person name="Saurin W."/>
            <person name="Quetier F."/>
            <person name="Schaefer M."/>
            <person name="Mueller-Auer S."/>
            <person name="Gabel C."/>
            <person name="Fuchs M."/>
            <person name="Benes V."/>
            <person name="Wurmbach E."/>
            <person name="Drzonek H."/>
            <person name="Erfle H."/>
            <person name="Jordan N."/>
            <person name="Bangert S."/>
            <person name="Wiedelmann R."/>
            <person name="Kranz H."/>
            <person name="Voss H."/>
            <person name="Holland R."/>
            <person name="Brandt P."/>
            <person name="Nyakatura G."/>
            <person name="Vezzi A."/>
            <person name="D'Angelo M."/>
            <person name="Pallavicini A."/>
            <person name="Toppo S."/>
            <person name="Simionati B."/>
            <person name="Conrad A."/>
            <person name="Hornischer K."/>
            <person name="Kauer G."/>
            <person name="Loehnert T.-H."/>
            <person name="Nordsiek G."/>
            <person name="Reichelt J."/>
            <person name="Scharfe M."/>
            <person name="Schoen O."/>
            <person name="Bargues M."/>
            <person name="Terol J."/>
            <person name="Climent J."/>
            <person name="Navarro P."/>
            <person name="Collado C."/>
            <person name="Perez-Perez A."/>
            <person name="Ottenwaelder B."/>
            <person name="Duchemin D."/>
            <person name="Cooke R."/>
            <person name="Laudie M."/>
            <person name="Berger-Llauro C."/>
            <person name="Purnelle B."/>
            <person name="Masuy D."/>
            <person name="de Haan M."/>
            <person name="Maarse A.C."/>
            <person name="Alcaraz J.-P."/>
            <person name="Cottet A."/>
            <person name="Casacuberta E."/>
            <person name="Monfort A."/>
            <person name="Argiriou A."/>
            <person name="Flores M."/>
            <person name="Liguori R."/>
            <person name="Vitale D."/>
            <person name="Mannhaupt G."/>
            <person name="Haase D."/>
            <person name="Schoof H."/>
            <person name="Rudd S."/>
            <person name="Zaccaria P."/>
            <person name="Mewes H.-W."/>
            <person name="Mayer K.F.X."/>
            <person name="Kaul S."/>
            <person name="Town C.D."/>
            <person name="Koo H.L."/>
            <person name="Tallon L.J."/>
            <person name="Jenkins J."/>
            <person name="Rooney T."/>
            <person name="Rizzo M."/>
            <person name="Walts A."/>
            <person name="Utterback T."/>
            <person name="Fujii C.Y."/>
            <person name="Shea T.P."/>
            <person name="Creasy T.H."/>
            <person name="Haas B."/>
            <person name="Maiti R."/>
            <person name="Wu D."/>
            <person name="Peterson J."/>
            <person name="Van Aken S."/>
            <person name="Pai G."/>
            <person name="Militscher J."/>
            <person name="Sellers P."/>
            <person name="Gill J.E."/>
            <person name="Feldblyum T.V."/>
            <person name="Preuss D."/>
            <person name="Lin X."/>
            <person name="Nierman W.C."/>
            <person name="Salzberg S.L."/>
            <person name="White O."/>
            <person name="Venter J.C."/>
            <person name="Fraser C.M."/>
            <person name="Kaneko T."/>
            <person name="Nakamura Y."/>
            <person name="Sato S."/>
            <person name="Kato T."/>
            <person name="Asamizu E."/>
            <person name="Sasamoto S."/>
            <person name="Kimura T."/>
            <person name="Idesawa K."/>
            <person name="Kawashima K."/>
            <person name="Kishida Y."/>
            <person name="Kiyokawa C."/>
            <person name="Kohara M."/>
            <person name="Matsumoto M."/>
            <person name="Matsuno A."/>
            <person name="Muraki A."/>
            <person name="Nakayama S."/>
            <person name="Nakazaki N."/>
            <person name="Shinpo S."/>
            <person name="Takeuchi C."/>
            <person name="Wada T."/>
            <person name="Watanabe A."/>
            <person name="Yamada M."/>
            <person name="Yasuda M."/>
            <person name="Tabata S."/>
        </authorList>
    </citation>
    <scope>NUCLEOTIDE SEQUENCE [LARGE SCALE GENOMIC DNA]</scope>
    <source>
        <strain>cv. Columbia</strain>
    </source>
</reference>
<reference key="3">
    <citation type="journal article" date="2017" name="Plant J.">
        <title>Araport11: a complete reannotation of the Arabidopsis thaliana reference genome.</title>
        <authorList>
            <person name="Cheng C.Y."/>
            <person name="Krishnakumar V."/>
            <person name="Chan A.P."/>
            <person name="Thibaud-Nissen F."/>
            <person name="Schobel S."/>
            <person name="Town C.D."/>
        </authorList>
    </citation>
    <scope>GENOME REANNOTATION</scope>
    <source>
        <strain>cv. Columbia</strain>
    </source>
</reference>
<reference key="4">
    <citation type="journal article" date="2004" name="Mol. Biol. Evol.">
        <title>Origin and maintenance of a broad-spectrum disease resistance locus in Arabidopsis.</title>
        <authorList>
            <person name="Xiao S."/>
            <person name="Emerson B."/>
            <person name="Ratanasut K."/>
            <person name="Patrick E."/>
            <person name="O'Neill C."/>
            <person name="Bancroft I."/>
            <person name="Turner J.G."/>
        </authorList>
    </citation>
    <scope>INDUCTION BY ERYSIPHE CICHORACEARUM</scope>
    <scope>GENE FAMILY</scope>
</reference>
<accession>Q9SCS9</accession>
<accession>Q9C5Z4</accession>
<protein>
    <recommendedName>
        <fullName evidence="5">RPW8-like protein 1</fullName>
        <shortName evidence="6">AtHR1</shortName>
    </recommendedName>
</protein>
<feature type="chain" id="PRO_0000431671" description="RPW8-like protein 1">
    <location>
        <begin position="1"/>
        <end position="189"/>
    </location>
</feature>
<feature type="transmembrane region" description="Helical" evidence="1">
    <location>
        <begin position="7"/>
        <end position="24"/>
    </location>
</feature>
<feature type="domain" description="RPW8" evidence="2">
    <location>
        <begin position="1"/>
        <end position="153"/>
    </location>
</feature>
<feature type="coiled-coil region" evidence="1">
    <location>
        <begin position="65"/>
        <end position="92"/>
    </location>
</feature>
<feature type="coiled-coil region" evidence="1">
    <location>
        <begin position="126"/>
        <end position="147"/>
    </location>
</feature>
<feature type="glycosylation site" description="N-linked (GlcNAc...) asparagine" evidence="3">
    <location>
        <position position="177"/>
    </location>
</feature>
<feature type="sequence conflict" description="In Ref. 1; AAK09270." evidence="7" ref="1">
    <original>D</original>
    <variation>E</variation>
    <location>
        <position position="21"/>
    </location>
</feature>
<feature type="sequence conflict" description="In Ref. 1; AAK09270." evidence="7" ref="1">
    <original>RS</original>
    <variation>KT</variation>
    <location>
        <begin position="29"/>
        <end position="30"/>
    </location>
</feature>
<organism evidence="10">
    <name type="scientific">Arabidopsis thaliana</name>
    <name type="common">Mouse-ear cress</name>
    <dbReference type="NCBI Taxonomy" id="3702"/>
    <lineage>
        <taxon>Eukaryota</taxon>
        <taxon>Viridiplantae</taxon>
        <taxon>Streptophyta</taxon>
        <taxon>Embryophyta</taxon>
        <taxon>Tracheophyta</taxon>
        <taxon>Spermatophyta</taxon>
        <taxon>Magnoliopsida</taxon>
        <taxon>eudicotyledons</taxon>
        <taxon>Gunneridae</taxon>
        <taxon>Pentapetalae</taxon>
        <taxon>rosids</taxon>
        <taxon>malvids</taxon>
        <taxon>Brassicales</taxon>
        <taxon>Brassicaceae</taxon>
        <taxon>Camelineae</taxon>
        <taxon>Arabidopsis</taxon>
    </lineage>
</organism>
<dbReference type="EMBL" id="AF273059">
    <property type="protein sequence ID" value="AAK09270.1"/>
    <property type="molecule type" value="Genomic_DNA"/>
</dbReference>
<dbReference type="EMBL" id="AL133363">
    <property type="protein sequence ID" value="CAB62474.1"/>
    <property type="molecule type" value="Genomic_DNA"/>
</dbReference>
<dbReference type="EMBL" id="CP002686">
    <property type="protein sequence ID" value="AEE78668.1"/>
    <property type="molecule type" value="Genomic_DNA"/>
</dbReference>
<dbReference type="PIR" id="T46076">
    <property type="entry name" value="T46076"/>
</dbReference>
<dbReference type="RefSeq" id="NP_190614.1">
    <property type="nucleotide sequence ID" value="NM_114905.2"/>
</dbReference>
<dbReference type="SMR" id="Q9SCS9"/>
<dbReference type="STRING" id="3702.Q9SCS9"/>
<dbReference type="GlyCosmos" id="Q9SCS9">
    <property type="glycosylation" value="1 site, No reported glycans"/>
</dbReference>
<dbReference type="GlyGen" id="Q9SCS9">
    <property type="glycosylation" value="1 site"/>
</dbReference>
<dbReference type="PaxDb" id="3702-AT3G50450.1"/>
<dbReference type="EnsemblPlants" id="AT3G50450.1">
    <property type="protein sequence ID" value="AT3G50450.1"/>
    <property type="gene ID" value="AT3G50450"/>
</dbReference>
<dbReference type="GeneID" id="824209"/>
<dbReference type="Gramene" id="AT3G50450.1">
    <property type="protein sequence ID" value="AT3G50450.1"/>
    <property type="gene ID" value="AT3G50450"/>
</dbReference>
<dbReference type="KEGG" id="ath:AT3G50450"/>
<dbReference type="Araport" id="AT3G50450"/>
<dbReference type="TAIR" id="AT3G50450">
    <property type="gene designation" value="HR1"/>
</dbReference>
<dbReference type="eggNOG" id="ENOG502SXRU">
    <property type="taxonomic scope" value="Eukaryota"/>
</dbReference>
<dbReference type="HOGENOM" id="CLU_1436271_0_0_1"/>
<dbReference type="InParanoid" id="Q9SCS9"/>
<dbReference type="OMA" id="IDIHFRW"/>
<dbReference type="PhylomeDB" id="Q9SCS9"/>
<dbReference type="PRO" id="PR:Q9SCS9"/>
<dbReference type="Proteomes" id="UP000006548">
    <property type="component" value="Chromosome 3"/>
</dbReference>
<dbReference type="ExpressionAtlas" id="Q9SCS9">
    <property type="expression patterns" value="baseline and differential"/>
</dbReference>
<dbReference type="GO" id="GO:0016020">
    <property type="term" value="C:membrane"/>
    <property type="evidence" value="ECO:0007669"/>
    <property type="project" value="UniProtKB-SubCell"/>
</dbReference>
<dbReference type="GO" id="GO:0009626">
    <property type="term" value="P:plant-type hypersensitive response"/>
    <property type="evidence" value="ECO:0007669"/>
    <property type="project" value="UniProtKB-KW"/>
</dbReference>
<dbReference type="GO" id="GO:0009620">
    <property type="term" value="P:response to fungus"/>
    <property type="evidence" value="ECO:0000270"/>
    <property type="project" value="UniProtKB"/>
</dbReference>
<dbReference type="InterPro" id="IPR008808">
    <property type="entry name" value="Powdery_mildew-R_dom"/>
</dbReference>
<dbReference type="Pfam" id="PF05659">
    <property type="entry name" value="RPW8"/>
    <property type="match status" value="1"/>
</dbReference>
<dbReference type="PROSITE" id="PS51153">
    <property type="entry name" value="RPW8"/>
    <property type="match status" value="1"/>
</dbReference>
<name>HR1_ARATH</name>
<sequence length="189" mass="22344">MPLVELLTSAALGLSLQLLHDAIIRAKERSLITRCILDRLDATLHKITPFVIKIDTLTEEVDEPFRKVIEELKRLLEKAIRLVDAYAELKLRNLLRKYRYKRRIKELDSSLRWMIDVDVQVNQWLDIKKLMGKMSEMNTKLDDITRQPMDIIEATGRSSEEDGCTKPTIDIHFRWKNQTKEHEIRFIFK</sequence>